<dbReference type="EC" id="3.4.24.-"/>
<dbReference type="EMBL" id="DQ676501">
    <property type="protein sequence ID" value="ABG77585.1"/>
    <property type="molecule type" value="mRNA"/>
</dbReference>
<dbReference type="SMR" id="A2CJE4"/>
<dbReference type="GO" id="GO:0005576">
    <property type="term" value="C:extracellular region"/>
    <property type="evidence" value="ECO:0007669"/>
    <property type="project" value="UniProtKB-SubCell"/>
</dbReference>
<dbReference type="GO" id="GO:0005886">
    <property type="term" value="C:plasma membrane"/>
    <property type="evidence" value="ECO:0007669"/>
    <property type="project" value="TreeGrafter"/>
</dbReference>
<dbReference type="GO" id="GO:0046872">
    <property type="term" value="F:metal ion binding"/>
    <property type="evidence" value="ECO:0007669"/>
    <property type="project" value="UniProtKB-KW"/>
</dbReference>
<dbReference type="GO" id="GO:0008237">
    <property type="term" value="F:metallopeptidase activity"/>
    <property type="evidence" value="ECO:0007669"/>
    <property type="project" value="UniProtKB-KW"/>
</dbReference>
<dbReference type="GO" id="GO:0090729">
    <property type="term" value="F:toxin activity"/>
    <property type="evidence" value="ECO:0007669"/>
    <property type="project" value="UniProtKB-KW"/>
</dbReference>
<dbReference type="GO" id="GO:0006508">
    <property type="term" value="P:proteolysis"/>
    <property type="evidence" value="ECO:0007669"/>
    <property type="project" value="UniProtKB-KW"/>
</dbReference>
<dbReference type="Gene3D" id="4.10.70.10">
    <property type="entry name" value="Disintegrin domain"/>
    <property type="match status" value="1"/>
</dbReference>
<dbReference type="InterPro" id="IPR006586">
    <property type="entry name" value="ADAM_Cys-rich"/>
</dbReference>
<dbReference type="InterPro" id="IPR018358">
    <property type="entry name" value="Disintegrin_CS"/>
</dbReference>
<dbReference type="InterPro" id="IPR001762">
    <property type="entry name" value="Disintegrin_dom"/>
</dbReference>
<dbReference type="InterPro" id="IPR036436">
    <property type="entry name" value="Disintegrin_dom_sf"/>
</dbReference>
<dbReference type="PANTHER" id="PTHR11905">
    <property type="entry name" value="ADAM A DISINTEGRIN AND METALLOPROTEASE DOMAIN"/>
    <property type="match status" value="1"/>
</dbReference>
<dbReference type="PANTHER" id="PTHR11905:SF32">
    <property type="entry name" value="DISINTEGRIN AND METALLOPROTEINASE DOMAIN-CONTAINING PROTEIN 28"/>
    <property type="match status" value="1"/>
</dbReference>
<dbReference type="Pfam" id="PF08516">
    <property type="entry name" value="ADAM_CR"/>
    <property type="match status" value="1"/>
</dbReference>
<dbReference type="Pfam" id="PF00200">
    <property type="entry name" value="Disintegrin"/>
    <property type="match status" value="1"/>
</dbReference>
<dbReference type="PRINTS" id="PR00289">
    <property type="entry name" value="DISINTEGRIN"/>
</dbReference>
<dbReference type="SMART" id="SM00608">
    <property type="entry name" value="ACR"/>
    <property type="match status" value="1"/>
</dbReference>
<dbReference type="SMART" id="SM00050">
    <property type="entry name" value="DISIN"/>
    <property type="match status" value="1"/>
</dbReference>
<dbReference type="SUPFAM" id="SSF57552">
    <property type="entry name" value="Blood coagulation inhibitor (disintegrin)"/>
    <property type="match status" value="1"/>
</dbReference>
<dbReference type="PROSITE" id="PS00427">
    <property type="entry name" value="DISINTEGRIN_1"/>
    <property type="match status" value="1"/>
</dbReference>
<dbReference type="PROSITE" id="PS50214">
    <property type="entry name" value="DISINTEGRIN_2"/>
    <property type="match status" value="1"/>
</dbReference>
<sequence length="175" mass="19439">NPCCDAATCKLKSGSQCGHGDCCEQCKFSKSGTECRASMSECDPAEHCTGQSSECPADVFHKNGQPCLDNYGYCYNGNCPIMYHQCYDLFGADVYEAEDSCFERNQKGNYYGYCRKENGNKIPCAPEDVKCGRLYSKDNSPGQNNPCKMLCSNEDEHKGRFLEQTGRGKVCSNRQ</sequence>
<evidence type="ECO:0000250" key="1"/>
<evidence type="ECO:0000255" key="2">
    <source>
        <dbReference type="PROSITE-ProRule" id="PRU00068"/>
    </source>
</evidence>
<evidence type="ECO:0000305" key="3"/>
<reference key="1">
    <citation type="journal article" date="2007" name="Gene">
        <title>Molecular evolution of PIII-SVMP and RGD disintegrin genes from the genus Crotalus.</title>
        <authorList>
            <person name="Soto J.G."/>
            <person name="White S.A."/>
            <person name="Reyes S.R."/>
            <person name="Regalado R."/>
            <person name="Sanchez E.E."/>
            <person name="Perez J.C."/>
        </authorList>
    </citation>
    <scope>NUCLEOTIDE SEQUENCE [MRNA]</scope>
    <source>
        <tissue>Venom gland</tissue>
    </source>
</reference>
<comment type="function">
    <text evidence="1">Snake venom metalloproteinase that impairs hemostasis in the envenomed animal.</text>
</comment>
<comment type="cofactor">
    <cofactor evidence="1">
        <name>Zn(2+)</name>
        <dbReference type="ChEBI" id="CHEBI:29105"/>
    </cofactor>
    <text evidence="1">Binds 1 zinc ion per subunit.</text>
</comment>
<comment type="subunit">
    <text evidence="1">Monomer.</text>
</comment>
<comment type="subcellular location">
    <subcellularLocation>
        <location evidence="1">Secreted</location>
    </subcellularLocation>
</comment>
<comment type="tissue specificity">
    <text>Expressed by the venom gland.</text>
</comment>
<comment type="PTM">
    <text evidence="1">Glycosylated.</text>
</comment>
<comment type="similarity">
    <text evidence="3">Belongs to the venom metalloproteinase (M12B) family. P-III subfamily. P-IIIa sub-subfamily.</text>
</comment>
<organism>
    <name type="scientific">Crotalus atrox</name>
    <name type="common">Western diamondback rattlesnake</name>
    <dbReference type="NCBI Taxonomy" id="8730"/>
    <lineage>
        <taxon>Eukaryota</taxon>
        <taxon>Metazoa</taxon>
        <taxon>Chordata</taxon>
        <taxon>Craniata</taxon>
        <taxon>Vertebrata</taxon>
        <taxon>Euteleostomi</taxon>
        <taxon>Lepidosauria</taxon>
        <taxon>Squamata</taxon>
        <taxon>Bifurcata</taxon>
        <taxon>Unidentata</taxon>
        <taxon>Episquamata</taxon>
        <taxon>Toxicofera</taxon>
        <taxon>Serpentes</taxon>
        <taxon>Colubroidea</taxon>
        <taxon>Viperidae</taxon>
        <taxon>Crotalinae</taxon>
        <taxon>Crotalus</taxon>
    </lineage>
</organism>
<feature type="chain" id="PRO_0000406575" description="Zinc metalloproteinase-disintegrin-like catroriarin">
    <location>
        <begin position="1" status="less than"/>
        <end position="175" status="greater than"/>
    </location>
</feature>
<feature type="domain" description="Disintegrin" evidence="2">
    <location>
        <begin position="1" status="less than"/>
        <end position="63"/>
    </location>
</feature>
<feature type="short sequence motif" description="D/ECD-tripeptide">
    <location>
        <begin position="41"/>
        <end position="43"/>
    </location>
</feature>
<feature type="binding site" evidence="1">
    <location>
        <position position="43"/>
    </location>
    <ligand>
        <name>Ca(2+)</name>
        <dbReference type="ChEBI" id="CHEBI:29108"/>
    </ligand>
</feature>
<feature type="binding site" evidence="1">
    <location>
        <position position="44"/>
    </location>
    <ligand>
        <name>Ca(2+)</name>
        <dbReference type="ChEBI" id="CHEBI:29108"/>
    </ligand>
</feature>
<feature type="binding site" evidence="1">
    <location>
        <position position="46"/>
    </location>
    <ligand>
        <name>Ca(2+)</name>
        <dbReference type="ChEBI" id="CHEBI:29108"/>
    </ligand>
</feature>
<feature type="binding site" evidence="1">
    <location>
        <position position="58"/>
    </location>
    <ligand>
        <name>Ca(2+)</name>
        <dbReference type="ChEBI" id="CHEBI:29108"/>
    </ligand>
</feature>
<feature type="binding site" evidence="1">
    <location>
        <position position="59"/>
    </location>
    <ligand>
        <name>Ca(2+)</name>
        <dbReference type="ChEBI" id="CHEBI:29108"/>
    </ligand>
</feature>
<feature type="disulfide bond" evidence="1">
    <location>
        <begin position="3"/>
        <end position="26"/>
    </location>
</feature>
<feature type="disulfide bond" evidence="1">
    <location>
        <begin position="17"/>
        <end position="23"/>
    </location>
</feature>
<feature type="disulfide bond" evidence="1">
    <location>
        <begin position="22"/>
        <end position="48"/>
    </location>
</feature>
<feature type="disulfide bond" evidence="2">
    <location>
        <begin position="35"/>
        <end position="55"/>
    </location>
</feature>
<feature type="disulfide bond" evidence="1">
    <location>
        <begin position="42"/>
        <end position="74"/>
    </location>
</feature>
<feature type="disulfide bond" evidence="1">
    <location>
        <begin position="67"/>
        <end position="79"/>
    </location>
</feature>
<feature type="disulfide bond" evidence="1">
    <location>
        <begin position="101"/>
        <end position="147"/>
    </location>
</feature>
<feature type="disulfide bond" evidence="1">
    <location>
        <begin position="114"/>
        <end position="124"/>
    </location>
</feature>
<feature type="disulfide bond" evidence="1">
    <location>
        <begin position="131"/>
        <end position="171"/>
    </location>
</feature>
<feature type="non-terminal residue">
    <location>
        <position position="1"/>
    </location>
</feature>
<feature type="non-terminal residue">
    <location>
        <position position="175"/>
    </location>
</feature>
<protein>
    <recommendedName>
        <fullName>Zinc metalloproteinase-disintegrin-like catroriarin</fullName>
        <ecNumber>3.4.24.-</ecNumber>
    </recommendedName>
    <alternativeName>
        <fullName>Snake venom metalloproteinase</fullName>
        <shortName>SVMP</shortName>
    </alternativeName>
</protein>
<accession>A2CJE4</accession>
<name>VM3C_CROAT</name>
<keyword id="KW-0106">Calcium</keyword>
<keyword id="KW-1015">Disulfide bond</keyword>
<keyword id="KW-0325">Glycoprotein</keyword>
<keyword id="KW-1199">Hemostasis impairing toxin</keyword>
<keyword id="KW-0378">Hydrolase</keyword>
<keyword id="KW-0479">Metal-binding</keyword>
<keyword id="KW-0482">Metalloprotease</keyword>
<keyword id="KW-0645">Protease</keyword>
<keyword id="KW-0964">Secreted</keyword>
<keyword id="KW-0800">Toxin</keyword>
<keyword id="KW-0862">Zinc</keyword>
<proteinExistence type="evidence at transcript level"/>